<protein>
    <recommendedName>
        <fullName evidence="1">Ethanolamine ammonia-lyase small subunit</fullName>
        <shortName evidence="1">EAL small subunit</shortName>
        <ecNumber evidence="1">4.3.1.7</ecNumber>
    </recommendedName>
</protein>
<sequence>MNEQELKQMIEGILTEMSGGKTTDTVAAAPTKSVVETVVTEGSIPDITEVDIKKQLLVPEPADREGYLKMKQMTPARLGLWRAGPRYKTETILRFRADHAVAQDSVFSYVSEDLVKEMNFIPVNTKCHDKDEYLTRPDLGREFDDEMVEVIRANTTKNAKLQIVVGDGLSSAAIEANIKDILPSIKQGLKMYNLDFDNIIFVKHCRVPSMDQIGEITGADVVCLLVGERPGLVTAESMSAYIAYKPTVGMPEARRTVISNIHSGGTPPVEAGAYIAELIHNMLEKKCSGIDLK</sequence>
<reference key="1">
    <citation type="journal article" date="2001" name="Science">
        <title>Comparative genomics of Listeria species.</title>
        <authorList>
            <person name="Glaser P."/>
            <person name="Frangeul L."/>
            <person name="Buchrieser C."/>
            <person name="Rusniok C."/>
            <person name="Amend A."/>
            <person name="Baquero F."/>
            <person name="Berche P."/>
            <person name="Bloecker H."/>
            <person name="Brandt P."/>
            <person name="Chakraborty T."/>
            <person name="Charbit A."/>
            <person name="Chetouani F."/>
            <person name="Couve E."/>
            <person name="de Daruvar A."/>
            <person name="Dehoux P."/>
            <person name="Domann E."/>
            <person name="Dominguez-Bernal G."/>
            <person name="Duchaud E."/>
            <person name="Durant L."/>
            <person name="Dussurget O."/>
            <person name="Entian K.-D."/>
            <person name="Fsihi H."/>
            <person name="Garcia-del Portillo F."/>
            <person name="Garrido P."/>
            <person name="Gautier L."/>
            <person name="Goebel W."/>
            <person name="Gomez-Lopez N."/>
            <person name="Hain T."/>
            <person name="Hauf J."/>
            <person name="Jackson D."/>
            <person name="Jones L.-M."/>
            <person name="Kaerst U."/>
            <person name="Kreft J."/>
            <person name="Kuhn M."/>
            <person name="Kunst F."/>
            <person name="Kurapkat G."/>
            <person name="Madueno E."/>
            <person name="Maitournam A."/>
            <person name="Mata Vicente J."/>
            <person name="Ng E."/>
            <person name="Nedjari H."/>
            <person name="Nordsiek G."/>
            <person name="Novella S."/>
            <person name="de Pablos B."/>
            <person name="Perez-Diaz J.-C."/>
            <person name="Purcell R."/>
            <person name="Remmel B."/>
            <person name="Rose M."/>
            <person name="Schlueter T."/>
            <person name="Simoes N."/>
            <person name="Tierrez A."/>
            <person name="Vazquez-Boland J.-A."/>
            <person name="Voss H."/>
            <person name="Wehland J."/>
            <person name="Cossart P."/>
        </authorList>
    </citation>
    <scope>NUCLEOTIDE SEQUENCE [LARGE SCALE GENOMIC DNA]</scope>
    <source>
        <strain>ATCC BAA-680 / CLIP 11262</strain>
    </source>
</reference>
<evidence type="ECO:0000255" key="1">
    <source>
        <dbReference type="HAMAP-Rule" id="MF_00601"/>
    </source>
</evidence>
<feature type="chain" id="PRO_0000205993" description="Ethanolamine ammonia-lyase small subunit">
    <location>
        <begin position="1"/>
        <end position="293"/>
    </location>
</feature>
<feature type="binding site" evidence="1">
    <location>
        <position position="207"/>
    </location>
    <ligand>
        <name>adenosylcob(III)alamin</name>
        <dbReference type="ChEBI" id="CHEBI:18408"/>
    </ligand>
</feature>
<feature type="binding site" evidence="1">
    <location>
        <position position="228"/>
    </location>
    <ligand>
        <name>adenosylcob(III)alamin</name>
        <dbReference type="ChEBI" id="CHEBI:18408"/>
    </ligand>
</feature>
<keyword id="KW-1283">Bacterial microcompartment</keyword>
<keyword id="KW-0846">Cobalamin</keyword>
<keyword id="KW-0170">Cobalt</keyword>
<keyword id="KW-0456">Lyase</keyword>
<name>EUTC_LISIN</name>
<proteinExistence type="inferred from homology"/>
<accession>Q92CN1</accession>
<gene>
    <name evidence="1" type="primary">eutC</name>
    <name type="ordered locus">lin1140</name>
</gene>
<dbReference type="EC" id="4.3.1.7" evidence="1"/>
<dbReference type="EMBL" id="AL596167">
    <property type="protein sequence ID" value="CAC96371.1"/>
    <property type="molecule type" value="Genomic_DNA"/>
</dbReference>
<dbReference type="PIR" id="AC1575">
    <property type="entry name" value="AC1575"/>
</dbReference>
<dbReference type="RefSeq" id="WP_003761788.1">
    <property type="nucleotide sequence ID" value="NC_003212.1"/>
</dbReference>
<dbReference type="SMR" id="Q92CN1"/>
<dbReference type="STRING" id="272626.gene:17565470"/>
<dbReference type="GeneID" id="93234588"/>
<dbReference type="KEGG" id="lin:eutC"/>
<dbReference type="eggNOG" id="COG4302">
    <property type="taxonomic scope" value="Bacteria"/>
</dbReference>
<dbReference type="HOGENOM" id="CLU_068224_0_0_9"/>
<dbReference type="OrthoDB" id="114248at2"/>
<dbReference type="UniPathway" id="UPA00560"/>
<dbReference type="Proteomes" id="UP000002513">
    <property type="component" value="Chromosome"/>
</dbReference>
<dbReference type="GO" id="GO:0009350">
    <property type="term" value="C:ethanolamine ammonia-lyase complex"/>
    <property type="evidence" value="ECO:0007669"/>
    <property type="project" value="UniProtKB-UniRule"/>
</dbReference>
<dbReference type="GO" id="GO:0031471">
    <property type="term" value="C:ethanolamine degradation polyhedral organelle"/>
    <property type="evidence" value="ECO:0007669"/>
    <property type="project" value="UniProtKB-UniRule"/>
</dbReference>
<dbReference type="GO" id="GO:0031419">
    <property type="term" value="F:cobalamin binding"/>
    <property type="evidence" value="ECO:0007669"/>
    <property type="project" value="UniProtKB-UniRule"/>
</dbReference>
<dbReference type="GO" id="GO:0008851">
    <property type="term" value="F:ethanolamine ammonia-lyase activity"/>
    <property type="evidence" value="ECO:0007669"/>
    <property type="project" value="UniProtKB-UniRule"/>
</dbReference>
<dbReference type="GO" id="GO:0006520">
    <property type="term" value="P:amino acid metabolic process"/>
    <property type="evidence" value="ECO:0007669"/>
    <property type="project" value="InterPro"/>
</dbReference>
<dbReference type="GO" id="GO:0046336">
    <property type="term" value="P:ethanolamine catabolic process"/>
    <property type="evidence" value="ECO:0007669"/>
    <property type="project" value="UniProtKB-UniRule"/>
</dbReference>
<dbReference type="FunFam" id="1.10.30.40:FF:000001">
    <property type="entry name" value="Ethanolamine ammonia-lyase light chain"/>
    <property type="match status" value="1"/>
</dbReference>
<dbReference type="FunFam" id="3.40.50.11240:FF:000001">
    <property type="entry name" value="Ethanolamine ammonia-lyase light chain"/>
    <property type="match status" value="1"/>
</dbReference>
<dbReference type="Gene3D" id="3.40.50.11240">
    <property type="entry name" value="Ethanolamine ammonia-lyase light chain (EutC)"/>
    <property type="match status" value="1"/>
</dbReference>
<dbReference type="Gene3D" id="1.10.30.40">
    <property type="entry name" value="Ethanolamine ammonia-lyase light chain (EutC), N-terminal domain"/>
    <property type="match status" value="1"/>
</dbReference>
<dbReference type="HAMAP" id="MF_00601">
    <property type="entry name" value="EutC"/>
    <property type="match status" value="1"/>
</dbReference>
<dbReference type="InterPro" id="IPR009246">
    <property type="entry name" value="EutC"/>
</dbReference>
<dbReference type="InterPro" id="IPR042251">
    <property type="entry name" value="EutC_C"/>
</dbReference>
<dbReference type="InterPro" id="IPR042255">
    <property type="entry name" value="EutC_N"/>
</dbReference>
<dbReference type="NCBIfam" id="NF003971">
    <property type="entry name" value="PRK05465.1"/>
    <property type="match status" value="1"/>
</dbReference>
<dbReference type="PANTHER" id="PTHR39330">
    <property type="entry name" value="ETHANOLAMINE AMMONIA-LYASE LIGHT CHAIN"/>
    <property type="match status" value="1"/>
</dbReference>
<dbReference type="PANTHER" id="PTHR39330:SF1">
    <property type="entry name" value="ETHANOLAMINE AMMONIA-LYASE SMALL SUBUNIT"/>
    <property type="match status" value="1"/>
</dbReference>
<dbReference type="Pfam" id="PF05985">
    <property type="entry name" value="EutC"/>
    <property type="match status" value="1"/>
</dbReference>
<dbReference type="PIRSF" id="PIRSF018982">
    <property type="entry name" value="EutC"/>
    <property type="match status" value="1"/>
</dbReference>
<organism>
    <name type="scientific">Listeria innocua serovar 6a (strain ATCC BAA-680 / CLIP 11262)</name>
    <dbReference type="NCBI Taxonomy" id="272626"/>
    <lineage>
        <taxon>Bacteria</taxon>
        <taxon>Bacillati</taxon>
        <taxon>Bacillota</taxon>
        <taxon>Bacilli</taxon>
        <taxon>Bacillales</taxon>
        <taxon>Listeriaceae</taxon>
        <taxon>Listeria</taxon>
    </lineage>
</organism>
<comment type="function">
    <text evidence="1">Catalyzes the deamination of various vicinal amino-alcohols to oxo compounds. Allows this organism to utilize ethanolamine as the sole source of nitrogen and carbon in the presence of external vitamin B12.</text>
</comment>
<comment type="catalytic activity">
    <reaction evidence="1">
        <text>ethanolamine = acetaldehyde + NH4(+)</text>
        <dbReference type="Rhea" id="RHEA:15313"/>
        <dbReference type="ChEBI" id="CHEBI:15343"/>
        <dbReference type="ChEBI" id="CHEBI:28938"/>
        <dbReference type="ChEBI" id="CHEBI:57603"/>
        <dbReference type="EC" id="4.3.1.7"/>
    </reaction>
</comment>
<comment type="cofactor">
    <cofactor evidence="1">
        <name>adenosylcob(III)alamin</name>
        <dbReference type="ChEBI" id="CHEBI:18408"/>
    </cofactor>
    <text evidence="1">Binds between the large and small subunits.</text>
</comment>
<comment type="pathway">
    <text evidence="1">Amine and polyamine degradation; ethanolamine degradation.</text>
</comment>
<comment type="subunit">
    <text evidence="1">The basic unit is a heterodimer which dimerizes to form tetramers. The heterotetramers trimerize; 6 large subunits form a core ring with 6 small subunits projecting outwards.</text>
</comment>
<comment type="subcellular location">
    <subcellularLocation>
        <location evidence="1">Bacterial microcompartment</location>
    </subcellularLocation>
</comment>
<comment type="similarity">
    <text evidence="1">Belongs to the EutC family.</text>
</comment>